<name>CPRP_CANPG</name>
<accession>P81033</accession>
<keyword id="KW-0903">Direct protein sequencing</keyword>
<keyword id="KW-0372">Hormone</keyword>
<keyword id="KW-0527">Neuropeptide</keyword>
<keyword id="KW-0964">Secreted</keyword>
<protein>
    <recommendedName>
        <fullName>CHH precursor-related peptide</fullName>
        <shortName>CPRP</shortName>
    </recommendedName>
</protein>
<dbReference type="GO" id="GO:0005576">
    <property type="term" value="C:extracellular region"/>
    <property type="evidence" value="ECO:0007669"/>
    <property type="project" value="UniProtKB-SubCell"/>
</dbReference>
<dbReference type="GO" id="GO:0005179">
    <property type="term" value="F:hormone activity"/>
    <property type="evidence" value="ECO:0007669"/>
    <property type="project" value="UniProtKB-KW"/>
</dbReference>
<dbReference type="GO" id="GO:0007218">
    <property type="term" value="P:neuropeptide signaling pathway"/>
    <property type="evidence" value="ECO:0007669"/>
    <property type="project" value="UniProtKB-KW"/>
</dbReference>
<dbReference type="InterPro" id="IPR005558">
    <property type="entry name" value="Crust_neurhormone_H"/>
</dbReference>
<dbReference type="Pfam" id="PF03858">
    <property type="entry name" value="Crust_neuro_H"/>
    <property type="match status" value="1"/>
</dbReference>
<feature type="peptide" id="PRO_0000044768" description="CHH precursor-related peptide">
    <location>
        <begin position="1"/>
        <end position="38"/>
    </location>
</feature>
<feature type="region of interest" description="Disordered" evidence="1">
    <location>
        <begin position="18"/>
        <end position="38"/>
    </location>
</feature>
<proteinExistence type="evidence at protein level"/>
<organism>
    <name type="scientific">Cancer pagurus</name>
    <name type="common">Rock crab</name>
    <dbReference type="NCBI Taxonomy" id="6755"/>
    <lineage>
        <taxon>Eukaryota</taxon>
        <taxon>Metazoa</taxon>
        <taxon>Ecdysozoa</taxon>
        <taxon>Arthropoda</taxon>
        <taxon>Crustacea</taxon>
        <taxon>Multicrustacea</taxon>
        <taxon>Malacostraca</taxon>
        <taxon>Eumalacostraca</taxon>
        <taxon>Eucarida</taxon>
        <taxon>Decapoda</taxon>
        <taxon>Pleocyemata</taxon>
        <taxon>Brachyura</taxon>
        <taxon>Eubrachyura</taxon>
        <taxon>Cancroidea</taxon>
        <taxon>Cancridae</taxon>
        <taxon>Cancer</taxon>
    </lineage>
</organism>
<reference key="1">
    <citation type="journal article" date="1998" name="Regul. Pept.">
        <title>Amino acid sequences of both isoforms of crustacean hyperglycemic hormone (CHH) and corresponding precursor-related peptide in Cancer pagurus.</title>
        <authorList>
            <person name="Chung J.S."/>
            <person name="Wilkinson M.C."/>
            <person name="Webster S.G."/>
        </authorList>
    </citation>
    <scope>PROTEIN SEQUENCE</scope>
    <source>
        <tissue>Sinus gland</tissue>
    </source>
</reference>
<evidence type="ECO:0000256" key="1">
    <source>
        <dbReference type="SAM" id="MobiDB-lite"/>
    </source>
</evidence>
<comment type="subcellular location">
    <subcellularLocation>
        <location>Secreted</location>
    </subcellularLocation>
</comment>
<comment type="tissue specificity">
    <text>Produced by the medulla terminalis X-organ in the eyestalks and transported to the sinus gland where it is stored and released.</text>
</comment>
<sequence length="38" mass="3970">RSAQGMGKMERLLASYRGALEPSTPLGDLSGSLGHPVE</sequence>